<reference key="1">
    <citation type="journal article" date="2009" name="Appl. Environ. Microbiol.">
        <title>Novel features of the polysaccharide-digesting gliding bacterium Flavobacterium johnsoniae as revealed by genome sequence analysis.</title>
        <authorList>
            <person name="McBride M.J."/>
            <person name="Xie G."/>
            <person name="Martens E.C."/>
            <person name="Lapidus A."/>
            <person name="Henrissat B."/>
            <person name="Rhodes R.G."/>
            <person name="Goltsman E."/>
            <person name="Wang W."/>
            <person name="Xu J."/>
            <person name="Hunnicutt D.W."/>
            <person name="Staroscik A.M."/>
            <person name="Hoover T.R."/>
            <person name="Cheng Y.Q."/>
            <person name="Stein J.L."/>
        </authorList>
    </citation>
    <scope>NUCLEOTIDE SEQUENCE [LARGE SCALE GENOMIC DNA]</scope>
    <source>
        <strain>ATCC 17061 / DSM 2064 / JCM 8514 / BCRC 14874 / CCUG 350202 / NBRC 14942 / NCIMB 11054 / UW101</strain>
    </source>
</reference>
<dbReference type="EMBL" id="CP000685">
    <property type="protein sequence ID" value="ABQ03761.1"/>
    <property type="molecule type" value="Genomic_DNA"/>
</dbReference>
<dbReference type="RefSeq" id="WP_012022815.1">
    <property type="nucleotide sequence ID" value="NC_009441.1"/>
</dbReference>
<dbReference type="SMR" id="A5FM03"/>
<dbReference type="STRING" id="376686.Fjoh_0726"/>
<dbReference type="KEGG" id="fjo:Fjoh_0726"/>
<dbReference type="eggNOG" id="COG0322">
    <property type="taxonomic scope" value="Bacteria"/>
</dbReference>
<dbReference type="HOGENOM" id="CLU_014841_3_2_10"/>
<dbReference type="OrthoDB" id="9804933at2"/>
<dbReference type="Proteomes" id="UP000006694">
    <property type="component" value="Chromosome"/>
</dbReference>
<dbReference type="GO" id="GO:0005737">
    <property type="term" value="C:cytoplasm"/>
    <property type="evidence" value="ECO:0007669"/>
    <property type="project" value="UniProtKB-SubCell"/>
</dbReference>
<dbReference type="GO" id="GO:0009380">
    <property type="term" value="C:excinuclease repair complex"/>
    <property type="evidence" value="ECO:0007669"/>
    <property type="project" value="InterPro"/>
</dbReference>
<dbReference type="GO" id="GO:0003677">
    <property type="term" value="F:DNA binding"/>
    <property type="evidence" value="ECO:0007669"/>
    <property type="project" value="UniProtKB-UniRule"/>
</dbReference>
<dbReference type="GO" id="GO:0009381">
    <property type="term" value="F:excinuclease ABC activity"/>
    <property type="evidence" value="ECO:0007669"/>
    <property type="project" value="UniProtKB-UniRule"/>
</dbReference>
<dbReference type="GO" id="GO:0006289">
    <property type="term" value="P:nucleotide-excision repair"/>
    <property type="evidence" value="ECO:0007669"/>
    <property type="project" value="UniProtKB-UniRule"/>
</dbReference>
<dbReference type="GO" id="GO:0009432">
    <property type="term" value="P:SOS response"/>
    <property type="evidence" value="ECO:0007669"/>
    <property type="project" value="UniProtKB-UniRule"/>
</dbReference>
<dbReference type="CDD" id="cd10434">
    <property type="entry name" value="GIY-YIG_UvrC_Cho"/>
    <property type="match status" value="1"/>
</dbReference>
<dbReference type="FunFam" id="3.40.1440.10:FF:000001">
    <property type="entry name" value="UvrABC system protein C"/>
    <property type="match status" value="1"/>
</dbReference>
<dbReference type="Gene3D" id="1.10.150.20">
    <property type="entry name" value="5' to 3' exonuclease, C-terminal subdomain"/>
    <property type="match status" value="1"/>
</dbReference>
<dbReference type="Gene3D" id="3.40.1440.10">
    <property type="entry name" value="GIY-YIG endonuclease"/>
    <property type="match status" value="1"/>
</dbReference>
<dbReference type="Gene3D" id="3.30.420.340">
    <property type="entry name" value="UvrC, RNAse H endonuclease domain"/>
    <property type="match status" value="1"/>
</dbReference>
<dbReference type="HAMAP" id="MF_00203">
    <property type="entry name" value="UvrC"/>
    <property type="match status" value="1"/>
</dbReference>
<dbReference type="InterPro" id="IPR000305">
    <property type="entry name" value="GIY-YIG_endonuc"/>
</dbReference>
<dbReference type="InterPro" id="IPR035901">
    <property type="entry name" value="GIY-YIG_endonuc_sf"/>
</dbReference>
<dbReference type="InterPro" id="IPR047296">
    <property type="entry name" value="GIY-YIG_UvrC_Cho"/>
</dbReference>
<dbReference type="InterPro" id="IPR010994">
    <property type="entry name" value="RuvA_2-like"/>
</dbReference>
<dbReference type="InterPro" id="IPR001943">
    <property type="entry name" value="UVR_dom"/>
</dbReference>
<dbReference type="InterPro" id="IPR036876">
    <property type="entry name" value="UVR_dom_sf"/>
</dbReference>
<dbReference type="InterPro" id="IPR050066">
    <property type="entry name" value="UvrABC_protein_C"/>
</dbReference>
<dbReference type="InterPro" id="IPR004791">
    <property type="entry name" value="UvrC"/>
</dbReference>
<dbReference type="InterPro" id="IPR001162">
    <property type="entry name" value="UvrC_RNase_H_dom"/>
</dbReference>
<dbReference type="InterPro" id="IPR038476">
    <property type="entry name" value="UvrC_RNase_H_dom_sf"/>
</dbReference>
<dbReference type="NCBIfam" id="TIGR00194">
    <property type="entry name" value="uvrC"/>
    <property type="match status" value="1"/>
</dbReference>
<dbReference type="PANTHER" id="PTHR30562:SF1">
    <property type="entry name" value="UVRABC SYSTEM PROTEIN C"/>
    <property type="match status" value="1"/>
</dbReference>
<dbReference type="PANTHER" id="PTHR30562">
    <property type="entry name" value="UVRC/OXIDOREDUCTASE"/>
    <property type="match status" value="1"/>
</dbReference>
<dbReference type="Pfam" id="PF01541">
    <property type="entry name" value="GIY-YIG"/>
    <property type="match status" value="1"/>
</dbReference>
<dbReference type="Pfam" id="PF14520">
    <property type="entry name" value="HHH_5"/>
    <property type="match status" value="1"/>
</dbReference>
<dbReference type="Pfam" id="PF22920">
    <property type="entry name" value="UvrC_RNaseH"/>
    <property type="match status" value="1"/>
</dbReference>
<dbReference type="Pfam" id="PF08459">
    <property type="entry name" value="UvrC_RNaseH_dom"/>
    <property type="match status" value="1"/>
</dbReference>
<dbReference type="SMART" id="SM00465">
    <property type="entry name" value="GIYc"/>
    <property type="match status" value="1"/>
</dbReference>
<dbReference type="SUPFAM" id="SSF46600">
    <property type="entry name" value="C-terminal UvrC-binding domain of UvrB"/>
    <property type="match status" value="1"/>
</dbReference>
<dbReference type="SUPFAM" id="SSF82771">
    <property type="entry name" value="GIY-YIG endonuclease"/>
    <property type="match status" value="1"/>
</dbReference>
<dbReference type="SUPFAM" id="SSF47781">
    <property type="entry name" value="RuvA domain 2-like"/>
    <property type="match status" value="1"/>
</dbReference>
<dbReference type="PROSITE" id="PS50164">
    <property type="entry name" value="GIY_YIG"/>
    <property type="match status" value="1"/>
</dbReference>
<dbReference type="PROSITE" id="PS50151">
    <property type="entry name" value="UVR"/>
    <property type="match status" value="1"/>
</dbReference>
<dbReference type="PROSITE" id="PS50165">
    <property type="entry name" value="UVRC"/>
    <property type="match status" value="1"/>
</dbReference>
<feature type="chain" id="PRO_1000077785" description="UvrABC system protein C">
    <location>
        <begin position="1"/>
        <end position="597"/>
    </location>
</feature>
<feature type="domain" description="GIY-YIG" evidence="1">
    <location>
        <begin position="15"/>
        <end position="93"/>
    </location>
</feature>
<feature type="domain" description="UVR" evidence="1">
    <location>
        <begin position="207"/>
        <end position="242"/>
    </location>
</feature>
<comment type="function">
    <text evidence="1">The UvrABC repair system catalyzes the recognition and processing of DNA lesions. UvrC both incises the 5' and 3' sides of the lesion. The N-terminal half is responsible for the 3' incision and the C-terminal half is responsible for the 5' incision.</text>
</comment>
<comment type="subunit">
    <text evidence="1">Interacts with UvrB in an incision complex.</text>
</comment>
<comment type="subcellular location">
    <subcellularLocation>
        <location evidence="1">Cytoplasm</location>
    </subcellularLocation>
</comment>
<comment type="similarity">
    <text evidence="1">Belongs to the UvrC family.</text>
</comment>
<accession>A5FM03</accession>
<organism>
    <name type="scientific">Flavobacterium johnsoniae (strain ATCC 17061 / DSM 2064 / JCM 8514 / BCRC 14874 / CCUG 350202 / NBRC 14942 / NCIMB 11054 / UW101)</name>
    <name type="common">Cytophaga johnsonae</name>
    <dbReference type="NCBI Taxonomy" id="376686"/>
    <lineage>
        <taxon>Bacteria</taxon>
        <taxon>Pseudomonadati</taxon>
        <taxon>Bacteroidota</taxon>
        <taxon>Flavobacteriia</taxon>
        <taxon>Flavobacteriales</taxon>
        <taxon>Flavobacteriaceae</taxon>
        <taxon>Flavobacterium</taxon>
    </lineage>
</organism>
<name>UVRC_FLAJ1</name>
<protein>
    <recommendedName>
        <fullName evidence="1">UvrABC system protein C</fullName>
        <shortName evidence="1">Protein UvrC</shortName>
    </recommendedName>
    <alternativeName>
        <fullName evidence="1">Excinuclease ABC subunit C</fullName>
    </alternativeName>
</protein>
<proteinExistence type="inferred from homology"/>
<evidence type="ECO:0000255" key="1">
    <source>
        <dbReference type="HAMAP-Rule" id="MF_00203"/>
    </source>
</evidence>
<sequence>MSKPSLDLQILTLPDNPGVYQYYDKDGKILYVGKAKNLKKRVSSYFNKIHDTAKTNVLVKKIVTIKHIVVPTETDALLLENNLIKTLQPRYNVLLRDDKSYPWICIKKEPFSRIFLTRRMVKDGSEYFGPYTNFKMVYTILDLIKELYPLRTCNYDLSQSNIDSGKFKVCLEYHIGNCKGPCEGLEPLEEYQRQVNAIREILKGNFKESLKDFKKLMNNYAQNLQFEEAQKIKEKIEVLENYQSRSTIVNPKITNIDVFSIISDESAAYVNFLQISHGSIIRSHTLEMKKKLDESDEELLELAIIELRERFQLMSKEIIVPFEIDLGENIKTTVPQLGDKKQILDLSIRNAKFYRIEQLKQLQIVDPDRHVNRIMAQMQKDLRLPVEPRHIECFDNSNIQGTNPVAACVVFKDGKPSKKDYRHFNVKTVEGPDDFASMTEIVYRRYKRLLDENQPLPQLIIIDGGKGQLSSALKSIDELGLRGKVAIIGIAKRLEELFYPGDSIPLYLDKKSETLKVIQQLRNEAHRFGITFHRDKRSKAALNSSVESIPGIGEKTMLTLIQHFKSVKRLKLATEKEISAVVGVSKAKKIVDFYKTN</sequence>
<gene>
    <name evidence="1" type="primary">uvrC</name>
    <name type="ordered locus">Fjoh_0726</name>
</gene>
<keyword id="KW-0963">Cytoplasm</keyword>
<keyword id="KW-0227">DNA damage</keyword>
<keyword id="KW-0228">DNA excision</keyword>
<keyword id="KW-0234">DNA repair</keyword>
<keyword id="KW-0267">Excision nuclease</keyword>
<keyword id="KW-0742">SOS response</keyword>